<organism>
    <name type="scientific">Klebsiella pneumoniae (strain 342)</name>
    <dbReference type="NCBI Taxonomy" id="507522"/>
    <lineage>
        <taxon>Bacteria</taxon>
        <taxon>Pseudomonadati</taxon>
        <taxon>Pseudomonadota</taxon>
        <taxon>Gammaproteobacteria</taxon>
        <taxon>Enterobacterales</taxon>
        <taxon>Enterobacteriaceae</taxon>
        <taxon>Klebsiella/Raoultella group</taxon>
        <taxon>Klebsiella</taxon>
        <taxon>Klebsiella pneumoniae complex</taxon>
    </lineage>
</organism>
<dbReference type="EC" id="3.5.1.5" evidence="1"/>
<dbReference type="EMBL" id="CP000964">
    <property type="protein sequence ID" value="ACI11499.1"/>
    <property type="molecule type" value="Genomic_DNA"/>
</dbReference>
<dbReference type="SMR" id="B5XU27"/>
<dbReference type="MEROPS" id="M38.982"/>
<dbReference type="KEGG" id="kpe:KPK_0652"/>
<dbReference type="HOGENOM" id="CLU_000980_0_0_6"/>
<dbReference type="UniPathway" id="UPA00258">
    <property type="reaction ID" value="UER00370"/>
</dbReference>
<dbReference type="Proteomes" id="UP000001734">
    <property type="component" value="Chromosome"/>
</dbReference>
<dbReference type="GO" id="GO:0005737">
    <property type="term" value="C:cytoplasm"/>
    <property type="evidence" value="ECO:0007669"/>
    <property type="project" value="UniProtKB-SubCell"/>
</dbReference>
<dbReference type="GO" id="GO:0016151">
    <property type="term" value="F:nickel cation binding"/>
    <property type="evidence" value="ECO:0007669"/>
    <property type="project" value="UniProtKB-UniRule"/>
</dbReference>
<dbReference type="GO" id="GO:0009039">
    <property type="term" value="F:urease activity"/>
    <property type="evidence" value="ECO:0007669"/>
    <property type="project" value="UniProtKB-UniRule"/>
</dbReference>
<dbReference type="GO" id="GO:0043419">
    <property type="term" value="P:urea catabolic process"/>
    <property type="evidence" value="ECO:0007669"/>
    <property type="project" value="UniProtKB-UniRule"/>
</dbReference>
<dbReference type="CDD" id="cd00375">
    <property type="entry name" value="Urease_alpha"/>
    <property type="match status" value="1"/>
</dbReference>
<dbReference type="Gene3D" id="3.20.20.140">
    <property type="entry name" value="Metal-dependent hydrolases"/>
    <property type="match status" value="1"/>
</dbReference>
<dbReference type="Gene3D" id="2.30.40.10">
    <property type="entry name" value="Urease, subunit C, domain 1"/>
    <property type="match status" value="1"/>
</dbReference>
<dbReference type="HAMAP" id="MF_01953">
    <property type="entry name" value="Urease_alpha"/>
    <property type="match status" value="1"/>
</dbReference>
<dbReference type="InterPro" id="IPR006680">
    <property type="entry name" value="Amidohydro-rel"/>
</dbReference>
<dbReference type="InterPro" id="IPR011059">
    <property type="entry name" value="Metal-dep_hydrolase_composite"/>
</dbReference>
<dbReference type="InterPro" id="IPR032466">
    <property type="entry name" value="Metal_Hydrolase"/>
</dbReference>
<dbReference type="InterPro" id="IPR011612">
    <property type="entry name" value="Urease_alpha_N_dom"/>
</dbReference>
<dbReference type="InterPro" id="IPR050112">
    <property type="entry name" value="Urease_alpha_subunit"/>
</dbReference>
<dbReference type="InterPro" id="IPR017950">
    <property type="entry name" value="Urease_AS"/>
</dbReference>
<dbReference type="InterPro" id="IPR005848">
    <property type="entry name" value="Urease_asu"/>
</dbReference>
<dbReference type="InterPro" id="IPR017951">
    <property type="entry name" value="Urease_asu_c"/>
</dbReference>
<dbReference type="InterPro" id="IPR029754">
    <property type="entry name" value="Urease_Ni-bd"/>
</dbReference>
<dbReference type="NCBIfam" id="NF009685">
    <property type="entry name" value="PRK13206.1"/>
    <property type="match status" value="1"/>
</dbReference>
<dbReference type="NCBIfam" id="NF009686">
    <property type="entry name" value="PRK13207.1"/>
    <property type="match status" value="1"/>
</dbReference>
<dbReference type="NCBIfam" id="TIGR01792">
    <property type="entry name" value="urease_alph"/>
    <property type="match status" value="1"/>
</dbReference>
<dbReference type="PANTHER" id="PTHR43440">
    <property type="entry name" value="UREASE"/>
    <property type="match status" value="1"/>
</dbReference>
<dbReference type="PANTHER" id="PTHR43440:SF1">
    <property type="entry name" value="UREASE"/>
    <property type="match status" value="1"/>
</dbReference>
<dbReference type="Pfam" id="PF01979">
    <property type="entry name" value="Amidohydro_1"/>
    <property type="match status" value="1"/>
</dbReference>
<dbReference type="Pfam" id="PF00449">
    <property type="entry name" value="Urease_alpha"/>
    <property type="match status" value="1"/>
</dbReference>
<dbReference type="PRINTS" id="PR01752">
    <property type="entry name" value="UREASE"/>
</dbReference>
<dbReference type="SUPFAM" id="SSF51338">
    <property type="entry name" value="Composite domain of metallo-dependent hydrolases"/>
    <property type="match status" value="2"/>
</dbReference>
<dbReference type="SUPFAM" id="SSF51556">
    <property type="entry name" value="Metallo-dependent hydrolases"/>
    <property type="match status" value="1"/>
</dbReference>
<dbReference type="PROSITE" id="PS01120">
    <property type="entry name" value="UREASE_1"/>
    <property type="match status" value="1"/>
</dbReference>
<dbReference type="PROSITE" id="PS00145">
    <property type="entry name" value="UREASE_2"/>
    <property type="match status" value="1"/>
</dbReference>
<dbReference type="PROSITE" id="PS51368">
    <property type="entry name" value="UREASE_3"/>
    <property type="match status" value="1"/>
</dbReference>
<evidence type="ECO:0000255" key="1">
    <source>
        <dbReference type="HAMAP-Rule" id="MF_01953"/>
    </source>
</evidence>
<comment type="catalytic activity">
    <reaction evidence="1">
        <text>urea + 2 H2O + H(+) = hydrogencarbonate + 2 NH4(+)</text>
        <dbReference type="Rhea" id="RHEA:20557"/>
        <dbReference type="ChEBI" id="CHEBI:15377"/>
        <dbReference type="ChEBI" id="CHEBI:15378"/>
        <dbReference type="ChEBI" id="CHEBI:16199"/>
        <dbReference type="ChEBI" id="CHEBI:17544"/>
        <dbReference type="ChEBI" id="CHEBI:28938"/>
        <dbReference type="EC" id="3.5.1.5"/>
    </reaction>
</comment>
<comment type="cofactor">
    <cofactor evidence="1">
        <name>Ni cation</name>
        <dbReference type="ChEBI" id="CHEBI:25516"/>
    </cofactor>
    <text evidence="1">Binds 2 nickel ions per subunit.</text>
</comment>
<comment type="pathway">
    <text evidence="1">Nitrogen metabolism; urea degradation; CO(2) and NH(3) from urea (urease route): step 1/1.</text>
</comment>
<comment type="subunit">
    <text evidence="1">Heterotrimer of UreA (gamma), UreB (beta) and UreC (alpha) subunits. Three heterotrimers associate to form the active enzyme.</text>
</comment>
<comment type="subcellular location">
    <subcellularLocation>
        <location evidence="1">Cytoplasm</location>
    </subcellularLocation>
</comment>
<comment type="PTM">
    <text evidence="1">Carboxylation allows a single lysine to coordinate two nickel ions.</text>
</comment>
<comment type="similarity">
    <text evidence="1">Belongs to the metallo-dependent hydrolases superfamily. Urease alpha subunit family.</text>
</comment>
<accession>B5XU27</accession>
<proteinExistence type="inferred from homology"/>
<keyword id="KW-0963">Cytoplasm</keyword>
<keyword id="KW-0378">Hydrolase</keyword>
<keyword id="KW-0479">Metal-binding</keyword>
<keyword id="KW-0533">Nickel</keyword>
<reference key="1">
    <citation type="journal article" date="2008" name="PLoS Genet.">
        <title>Complete genome sequence of the N2-fixing broad host range endophyte Klebsiella pneumoniae 342 and virulence predictions verified in mice.</title>
        <authorList>
            <person name="Fouts D.E."/>
            <person name="Tyler H.L."/>
            <person name="DeBoy R.T."/>
            <person name="Daugherty S."/>
            <person name="Ren Q."/>
            <person name="Badger J.H."/>
            <person name="Durkin A.S."/>
            <person name="Huot H."/>
            <person name="Shrivastava S."/>
            <person name="Kothari S."/>
            <person name="Dodson R.J."/>
            <person name="Mohamoud Y."/>
            <person name="Khouri H."/>
            <person name="Roesch L.F.W."/>
            <person name="Krogfelt K.A."/>
            <person name="Struve C."/>
            <person name="Triplett E.W."/>
            <person name="Methe B.A."/>
        </authorList>
    </citation>
    <scope>NUCLEOTIDE SEQUENCE [LARGE SCALE GENOMIC DNA]</scope>
    <source>
        <strain>342</strain>
    </source>
</reference>
<feature type="chain" id="PRO_1000188878" description="Urease subunit alpha">
    <location>
        <begin position="1"/>
        <end position="567"/>
    </location>
</feature>
<feature type="domain" description="Urease" evidence="1">
    <location>
        <begin position="129"/>
        <end position="567"/>
    </location>
</feature>
<feature type="active site" description="Proton donor" evidence="1">
    <location>
        <position position="320"/>
    </location>
</feature>
<feature type="binding site" evidence="1">
    <location>
        <position position="134"/>
    </location>
    <ligand>
        <name>Ni(2+)</name>
        <dbReference type="ChEBI" id="CHEBI:49786"/>
        <label>1</label>
    </ligand>
</feature>
<feature type="binding site" evidence="1">
    <location>
        <position position="136"/>
    </location>
    <ligand>
        <name>Ni(2+)</name>
        <dbReference type="ChEBI" id="CHEBI:49786"/>
        <label>1</label>
    </ligand>
</feature>
<feature type="binding site" description="via carbamate group" evidence="1">
    <location>
        <position position="217"/>
    </location>
    <ligand>
        <name>Ni(2+)</name>
        <dbReference type="ChEBI" id="CHEBI:49786"/>
        <label>1</label>
    </ligand>
</feature>
<feature type="binding site" description="via carbamate group" evidence="1">
    <location>
        <position position="217"/>
    </location>
    <ligand>
        <name>Ni(2+)</name>
        <dbReference type="ChEBI" id="CHEBI:49786"/>
        <label>2</label>
    </ligand>
</feature>
<feature type="binding site" evidence="1">
    <location>
        <position position="219"/>
    </location>
    <ligand>
        <name>substrate</name>
    </ligand>
</feature>
<feature type="binding site" evidence="1">
    <location>
        <position position="246"/>
    </location>
    <ligand>
        <name>Ni(2+)</name>
        <dbReference type="ChEBI" id="CHEBI:49786"/>
        <label>2</label>
    </ligand>
</feature>
<feature type="binding site" evidence="1">
    <location>
        <position position="272"/>
    </location>
    <ligand>
        <name>Ni(2+)</name>
        <dbReference type="ChEBI" id="CHEBI:49786"/>
        <label>2</label>
    </ligand>
</feature>
<feature type="binding site" evidence="1">
    <location>
        <position position="360"/>
    </location>
    <ligand>
        <name>Ni(2+)</name>
        <dbReference type="ChEBI" id="CHEBI:49786"/>
        <label>1</label>
    </ligand>
</feature>
<feature type="modified residue" description="N6-carboxylysine" evidence="1">
    <location>
        <position position="217"/>
    </location>
</feature>
<gene>
    <name evidence="1" type="primary">ureC</name>
    <name type="ordered locus">KPK_0652</name>
</gene>
<name>URE1_KLEP3</name>
<protein>
    <recommendedName>
        <fullName evidence="1">Urease subunit alpha</fullName>
        <ecNumber evidence="1">3.5.1.5</ecNumber>
    </recommendedName>
    <alternativeName>
        <fullName evidence="1">Urea amidohydrolase subunit alpha</fullName>
    </alternativeName>
</protein>
<sequence length="567" mass="60365">MSNISRQAYADMFGPTVGDKVRLADTELWIEVEDDLTTYGEEVKFGGGKVIRDGMGQGQMLAADCVDLVLTNALIVDHWGIVKADIGVKDGRIFAIGKAGNPDIQPNVTIPIGAATEVIAAEGKIVTAGGIDTHIHWICPQQAEEALVSGVTTMVGGGTGPAAGTHATTCTPGPWYISRMLQAADSLPVNIGLLGKGNVSQPDALREQVAAGVIGLKIHEDWGATPAAIDCALTVADEMDIQVALHSDTLNESGFVEDTLAAIGGRTIHTFHTEGAGGGHAPDIITACAHPNILPSSTNPTLPYTLNTIDEHLDMLMVCHHLDPDIAEDVAFAESRIRRETIAAEDVLHDLGAFSLTSSDSQAMGRVGEVVLRTWQVAHRMKVQRGALAEETGDNDNFRVKRYIAKYTINPALTHGIAHEVGSIEVGKLADLVVWSPAFFGVKPATVIKGGMIAIAPMGDINASIPTPQPVHYRPMFGALGSARHHCRLTFLSQAAADNGVAERLNLRSAIAVVKGCRTVQKADMVHNSLQPNITVDTQTYEVRVDGELITSEPADVLPMAQRYFLF</sequence>